<protein>
    <recommendedName>
        <fullName evidence="1">Large ribosomal subunit protein bL12</fullName>
    </recommendedName>
    <alternativeName>
        <fullName evidence="3">50S ribosomal protein L7/L12</fullName>
    </alternativeName>
</protein>
<evidence type="ECO:0000255" key="1">
    <source>
        <dbReference type="HAMAP-Rule" id="MF_00368"/>
    </source>
</evidence>
<evidence type="ECO:0000256" key="2">
    <source>
        <dbReference type="SAM" id="MobiDB-lite"/>
    </source>
</evidence>
<evidence type="ECO:0000305" key="3"/>
<accession>A7I3U0</accession>
<keyword id="KW-1185">Reference proteome</keyword>
<keyword id="KW-0687">Ribonucleoprotein</keyword>
<keyword id="KW-0689">Ribosomal protein</keyword>
<dbReference type="EMBL" id="CP000776">
    <property type="protein sequence ID" value="ABS52218.1"/>
    <property type="molecule type" value="Genomic_DNA"/>
</dbReference>
<dbReference type="RefSeq" id="WP_012109487.1">
    <property type="nucleotide sequence ID" value="NC_009714.1"/>
</dbReference>
<dbReference type="SMR" id="A7I3U0"/>
<dbReference type="STRING" id="360107.CHAB381_1664"/>
<dbReference type="KEGG" id="cha:CHAB381_1664"/>
<dbReference type="eggNOG" id="COG0222">
    <property type="taxonomic scope" value="Bacteria"/>
</dbReference>
<dbReference type="HOGENOM" id="CLU_086499_3_0_7"/>
<dbReference type="OrthoDB" id="9811748at2"/>
<dbReference type="Proteomes" id="UP000002407">
    <property type="component" value="Chromosome"/>
</dbReference>
<dbReference type="GO" id="GO:0022625">
    <property type="term" value="C:cytosolic large ribosomal subunit"/>
    <property type="evidence" value="ECO:0007669"/>
    <property type="project" value="TreeGrafter"/>
</dbReference>
<dbReference type="GO" id="GO:0003729">
    <property type="term" value="F:mRNA binding"/>
    <property type="evidence" value="ECO:0007669"/>
    <property type="project" value="TreeGrafter"/>
</dbReference>
<dbReference type="GO" id="GO:0003735">
    <property type="term" value="F:structural constituent of ribosome"/>
    <property type="evidence" value="ECO:0007669"/>
    <property type="project" value="InterPro"/>
</dbReference>
<dbReference type="GO" id="GO:0006412">
    <property type="term" value="P:translation"/>
    <property type="evidence" value="ECO:0007669"/>
    <property type="project" value="UniProtKB-UniRule"/>
</dbReference>
<dbReference type="CDD" id="cd00387">
    <property type="entry name" value="Ribosomal_L7_L12"/>
    <property type="match status" value="1"/>
</dbReference>
<dbReference type="FunFam" id="3.30.1390.10:FF:000001">
    <property type="entry name" value="50S ribosomal protein L7/L12"/>
    <property type="match status" value="1"/>
</dbReference>
<dbReference type="Gene3D" id="3.30.1390.10">
    <property type="match status" value="1"/>
</dbReference>
<dbReference type="Gene3D" id="1.20.5.710">
    <property type="entry name" value="Single helix bin"/>
    <property type="match status" value="1"/>
</dbReference>
<dbReference type="HAMAP" id="MF_00368">
    <property type="entry name" value="Ribosomal_bL12"/>
    <property type="match status" value="1"/>
</dbReference>
<dbReference type="InterPro" id="IPR000206">
    <property type="entry name" value="Ribosomal_bL12"/>
</dbReference>
<dbReference type="InterPro" id="IPR013823">
    <property type="entry name" value="Ribosomal_bL12_C"/>
</dbReference>
<dbReference type="InterPro" id="IPR014719">
    <property type="entry name" value="Ribosomal_bL12_C/ClpS-like"/>
</dbReference>
<dbReference type="InterPro" id="IPR008932">
    <property type="entry name" value="Ribosomal_bL12_oligo"/>
</dbReference>
<dbReference type="InterPro" id="IPR036235">
    <property type="entry name" value="Ribosomal_bL12_oligo_N_sf"/>
</dbReference>
<dbReference type="NCBIfam" id="TIGR00855">
    <property type="entry name" value="L12"/>
    <property type="match status" value="1"/>
</dbReference>
<dbReference type="PANTHER" id="PTHR45987">
    <property type="entry name" value="39S RIBOSOMAL PROTEIN L12"/>
    <property type="match status" value="1"/>
</dbReference>
<dbReference type="PANTHER" id="PTHR45987:SF4">
    <property type="entry name" value="LARGE RIBOSOMAL SUBUNIT PROTEIN BL12M"/>
    <property type="match status" value="1"/>
</dbReference>
<dbReference type="Pfam" id="PF00542">
    <property type="entry name" value="Ribosomal_L12"/>
    <property type="match status" value="1"/>
</dbReference>
<dbReference type="Pfam" id="PF16320">
    <property type="entry name" value="Ribosomal_L12_N"/>
    <property type="match status" value="1"/>
</dbReference>
<dbReference type="SUPFAM" id="SSF54736">
    <property type="entry name" value="ClpS-like"/>
    <property type="match status" value="1"/>
</dbReference>
<dbReference type="SUPFAM" id="SSF48300">
    <property type="entry name" value="Ribosomal protein L7/12, oligomerisation (N-terminal) domain"/>
    <property type="match status" value="1"/>
</dbReference>
<feature type="chain" id="PRO_1000006981" description="Large ribosomal subunit protein bL12">
    <location>
        <begin position="1"/>
        <end position="124"/>
    </location>
</feature>
<feature type="region of interest" description="Disordered" evidence="2">
    <location>
        <begin position="99"/>
        <end position="124"/>
    </location>
</feature>
<feature type="compositionally biased region" description="Basic and acidic residues" evidence="2">
    <location>
        <begin position="101"/>
        <end position="114"/>
    </location>
</feature>
<feature type="compositionally biased region" description="Low complexity" evidence="2">
    <location>
        <begin position="115"/>
        <end position="124"/>
    </location>
</feature>
<proteinExistence type="inferred from homology"/>
<comment type="function">
    <text evidence="1">Forms part of the ribosomal stalk which helps the ribosome interact with GTP-bound translation factors. Is thus essential for accurate translation.</text>
</comment>
<comment type="subunit">
    <text evidence="1">Homodimer. Part of the ribosomal stalk of the 50S ribosomal subunit. Forms a multimeric L10(L12)X complex, where L10 forms an elongated spine to which 2 to 4 L12 dimers bind in a sequential fashion. Binds GTP-bound translation factors.</text>
</comment>
<comment type="similarity">
    <text evidence="1">Belongs to the bacterial ribosomal protein bL12 family.</text>
</comment>
<organism>
    <name type="scientific">Campylobacter hominis (strain ATCC BAA-381 / DSM 21671 / CCUG 45161 / LMG 19568 / NCTC 13146 / CH001A)</name>
    <dbReference type="NCBI Taxonomy" id="360107"/>
    <lineage>
        <taxon>Bacteria</taxon>
        <taxon>Pseudomonadati</taxon>
        <taxon>Campylobacterota</taxon>
        <taxon>Epsilonproteobacteria</taxon>
        <taxon>Campylobacterales</taxon>
        <taxon>Campylobacteraceae</taxon>
        <taxon>Campylobacter</taxon>
    </lineage>
</organism>
<sequence>MAITKEDVLEYISNLSVLELSELVKEFEEKFGVSAAPVMVAGGAGAGAAAAAEEKTEFDLVLTDTGAEKIKVIKAVRAITGLGLKEAKDAVEKTPSVLKEGMNKEDAEKAKADLEAAGAKVELK</sequence>
<name>RL7_CAMHC</name>
<reference key="1">
    <citation type="submission" date="2007-07" db="EMBL/GenBank/DDBJ databases">
        <title>Complete genome sequence of Campylobacter hominis ATCC BAA-381, a commensal isolated from the human gastrointestinal tract.</title>
        <authorList>
            <person name="Fouts D.E."/>
            <person name="Mongodin E.F."/>
            <person name="Puiu D."/>
            <person name="Sebastian Y."/>
            <person name="Miller W.G."/>
            <person name="Mandrell R.E."/>
            <person name="Nelson K.E."/>
        </authorList>
    </citation>
    <scope>NUCLEOTIDE SEQUENCE [LARGE SCALE GENOMIC DNA]</scope>
    <source>
        <strain>ATCC BAA-381 / DSM 21671 / CCUG 45161 / LMG 19568 / NCTC 13146 / CH001A</strain>
    </source>
</reference>
<gene>
    <name evidence="1" type="primary">rplL</name>
    <name type="ordered locus">CHAB381_1664</name>
</gene>